<keyword id="KW-0963">Cytoplasm</keyword>
<keyword id="KW-0444">Lipid biosynthesis</keyword>
<keyword id="KW-0443">Lipid metabolism</keyword>
<keyword id="KW-0520">NAD</keyword>
<keyword id="KW-0521">NADP</keyword>
<keyword id="KW-0547">Nucleotide-binding</keyword>
<keyword id="KW-0560">Oxidoreductase</keyword>
<keyword id="KW-0594">Phospholipid biosynthesis</keyword>
<keyword id="KW-1208">Phospholipid metabolism</keyword>
<keyword id="KW-1185">Reference proteome</keyword>
<proteinExistence type="inferred from homology"/>
<name>GPDA_LEIXX</name>
<sequence>MIGAGSWGTTFAKILADGGNDVVVWARRPELAREIDEGKRNSDYLQGINLPRSLRATSHLGEAMRGAEQVFVSLPSQTLRSNLDAMIPYLGPATVVISLMKGVEKGTGLRMSEVIAQGLPIDPEQIAVVSGPNLALEIAREQPTAAVVSSVSPATAVAVATSATNRYFRSFVNTDVIGTEFGGVLKNLIAVAIGIVDGVGYGENTKASIITRGLVEMTDFAVAYGADPQTLSGLAGLGDLIATCESPLSRNNTAGRLLGQGYSFTDVVKQMDQAAEGLASVTPILSLAEARGVEMPIVRQVSQVLAGTLAPKDIAPHLTTDDEPQGERTRGERTTDDGQGQGRTSVWGSLKRAFDQLRDGGGSSRRDRP</sequence>
<organism>
    <name type="scientific">Leifsonia xyli subsp. xyli (strain CTCB07)</name>
    <dbReference type="NCBI Taxonomy" id="281090"/>
    <lineage>
        <taxon>Bacteria</taxon>
        <taxon>Bacillati</taxon>
        <taxon>Actinomycetota</taxon>
        <taxon>Actinomycetes</taxon>
        <taxon>Micrococcales</taxon>
        <taxon>Microbacteriaceae</taxon>
        <taxon>Leifsonia</taxon>
    </lineage>
</organism>
<accession>Q6AFK3</accession>
<reference key="1">
    <citation type="journal article" date="2004" name="Mol. Plant Microbe Interact.">
        <title>The genome sequence of the Gram-positive sugarcane pathogen Leifsonia xyli subsp. xyli.</title>
        <authorList>
            <person name="Monteiro-Vitorello C.B."/>
            <person name="Camargo L.E.A."/>
            <person name="Van Sluys M.A."/>
            <person name="Kitajima J.P."/>
            <person name="Truffi D."/>
            <person name="do Amaral A.M."/>
            <person name="Harakava R."/>
            <person name="de Oliveira J.C.F."/>
            <person name="Wood D."/>
            <person name="de Oliveira M.C."/>
            <person name="Miyaki C.Y."/>
            <person name="Takita M.A."/>
            <person name="da Silva A.C.R."/>
            <person name="Furlan L.R."/>
            <person name="Carraro D.M."/>
            <person name="Camarotte G."/>
            <person name="Almeida N.F. Jr."/>
            <person name="Carrer H."/>
            <person name="Coutinho L.L."/>
            <person name="El-Dorry H.A."/>
            <person name="Ferro M.I.T."/>
            <person name="Gagliardi P.R."/>
            <person name="Giglioti E."/>
            <person name="Goldman M.H.S."/>
            <person name="Goldman G.H."/>
            <person name="Kimura E.T."/>
            <person name="Ferro E.S."/>
            <person name="Kuramae E.E."/>
            <person name="Lemos E.G.M."/>
            <person name="Lemos M.V.F."/>
            <person name="Mauro S.M.Z."/>
            <person name="Machado M.A."/>
            <person name="Marino C.L."/>
            <person name="Menck C.F."/>
            <person name="Nunes L.R."/>
            <person name="Oliveira R.C."/>
            <person name="Pereira G.G."/>
            <person name="Siqueira W."/>
            <person name="de Souza A.A."/>
            <person name="Tsai S.M."/>
            <person name="Zanca A.S."/>
            <person name="Simpson A.J.G."/>
            <person name="Brumbley S.M."/>
            <person name="Setubal J.C."/>
        </authorList>
    </citation>
    <scope>NUCLEOTIDE SEQUENCE [LARGE SCALE GENOMIC DNA]</scope>
    <source>
        <strain>CTCB07</strain>
    </source>
</reference>
<protein>
    <recommendedName>
        <fullName evidence="1">Glycerol-3-phosphate dehydrogenase [NAD(P)+]</fullName>
        <ecNumber evidence="1">1.1.1.94</ecNumber>
    </recommendedName>
    <alternativeName>
        <fullName evidence="1">NAD(P)(+)-dependent glycerol-3-phosphate dehydrogenase</fullName>
    </alternativeName>
    <alternativeName>
        <fullName evidence="1">NAD(P)H-dependent dihydroxyacetone-phosphate reductase</fullName>
    </alternativeName>
</protein>
<dbReference type="EC" id="1.1.1.94" evidence="1"/>
<dbReference type="EMBL" id="AE016822">
    <property type="protein sequence ID" value="AAT88842.1"/>
    <property type="molecule type" value="Genomic_DNA"/>
</dbReference>
<dbReference type="SMR" id="Q6AFK3"/>
<dbReference type="STRING" id="281090.Lxx09700"/>
<dbReference type="KEGG" id="lxx:Lxx09700"/>
<dbReference type="eggNOG" id="COG0240">
    <property type="taxonomic scope" value="Bacteria"/>
</dbReference>
<dbReference type="HOGENOM" id="CLU_033449_0_2_11"/>
<dbReference type="UniPathway" id="UPA00940"/>
<dbReference type="Proteomes" id="UP000001306">
    <property type="component" value="Chromosome"/>
</dbReference>
<dbReference type="GO" id="GO:0005829">
    <property type="term" value="C:cytosol"/>
    <property type="evidence" value="ECO:0007669"/>
    <property type="project" value="TreeGrafter"/>
</dbReference>
<dbReference type="GO" id="GO:0047952">
    <property type="term" value="F:glycerol-3-phosphate dehydrogenase [NAD(P)+] activity"/>
    <property type="evidence" value="ECO:0007669"/>
    <property type="project" value="UniProtKB-UniRule"/>
</dbReference>
<dbReference type="GO" id="GO:0051287">
    <property type="term" value="F:NAD binding"/>
    <property type="evidence" value="ECO:0007669"/>
    <property type="project" value="InterPro"/>
</dbReference>
<dbReference type="GO" id="GO:0005975">
    <property type="term" value="P:carbohydrate metabolic process"/>
    <property type="evidence" value="ECO:0007669"/>
    <property type="project" value="InterPro"/>
</dbReference>
<dbReference type="GO" id="GO:0046167">
    <property type="term" value="P:glycerol-3-phosphate biosynthetic process"/>
    <property type="evidence" value="ECO:0007669"/>
    <property type="project" value="UniProtKB-UniRule"/>
</dbReference>
<dbReference type="GO" id="GO:0046168">
    <property type="term" value="P:glycerol-3-phosphate catabolic process"/>
    <property type="evidence" value="ECO:0007669"/>
    <property type="project" value="InterPro"/>
</dbReference>
<dbReference type="GO" id="GO:0006650">
    <property type="term" value="P:glycerophospholipid metabolic process"/>
    <property type="evidence" value="ECO:0007669"/>
    <property type="project" value="UniProtKB-UniRule"/>
</dbReference>
<dbReference type="GO" id="GO:0008654">
    <property type="term" value="P:phospholipid biosynthetic process"/>
    <property type="evidence" value="ECO:0007669"/>
    <property type="project" value="UniProtKB-KW"/>
</dbReference>
<dbReference type="FunFam" id="1.10.1040.10:FF:000001">
    <property type="entry name" value="Glycerol-3-phosphate dehydrogenase [NAD(P)+]"/>
    <property type="match status" value="1"/>
</dbReference>
<dbReference type="FunFam" id="3.40.50.720:FF:000019">
    <property type="entry name" value="Glycerol-3-phosphate dehydrogenase [NAD(P)+]"/>
    <property type="match status" value="1"/>
</dbReference>
<dbReference type="Gene3D" id="1.10.1040.10">
    <property type="entry name" value="N-(1-d-carboxylethyl)-l-norvaline Dehydrogenase, domain 2"/>
    <property type="match status" value="1"/>
</dbReference>
<dbReference type="Gene3D" id="3.40.50.720">
    <property type="entry name" value="NAD(P)-binding Rossmann-like Domain"/>
    <property type="match status" value="1"/>
</dbReference>
<dbReference type="HAMAP" id="MF_00394">
    <property type="entry name" value="NAD_Glyc3P_dehydrog"/>
    <property type="match status" value="1"/>
</dbReference>
<dbReference type="InterPro" id="IPR008927">
    <property type="entry name" value="6-PGluconate_DH-like_C_sf"/>
</dbReference>
<dbReference type="InterPro" id="IPR013328">
    <property type="entry name" value="6PGD_dom2"/>
</dbReference>
<dbReference type="InterPro" id="IPR006168">
    <property type="entry name" value="G3P_DH_NAD-dep"/>
</dbReference>
<dbReference type="InterPro" id="IPR006109">
    <property type="entry name" value="G3P_DH_NAD-dep_C"/>
</dbReference>
<dbReference type="InterPro" id="IPR011128">
    <property type="entry name" value="G3P_DH_NAD-dep_N"/>
</dbReference>
<dbReference type="InterPro" id="IPR036291">
    <property type="entry name" value="NAD(P)-bd_dom_sf"/>
</dbReference>
<dbReference type="NCBIfam" id="NF000940">
    <property type="entry name" value="PRK00094.1-2"/>
    <property type="match status" value="1"/>
</dbReference>
<dbReference type="NCBIfam" id="NF000942">
    <property type="entry name" value="PRK00094.1-4"/>
    <property type="match status" value="1"/>
</dbReference>
<dbReference type="PANTHER" id="PTHR11728">
    <property type="entry name" value="GLYCEROL-3-PHOSPHATE DEHYDROGENASE"/>
    <property type="match status" value="1"/>
</dbReference>
<dbReference type="PANTHER" id="PTHR11728:SF1">
    <property type="entry name" value="GLYCEROL-3-PHOSPHATE DEHYDROGENASE [NAD(+)] 2, CHLOROPLASTIC"/>
    <property type="match status" value="1"/>
</dbReference>
<dbReference type="Pfam" id="PF07479">
    <property type="entry name" value="NAD_Gly3P_dh_C"/>
    <property type="match status" value="1"/>
</dbReference>
<dbReference type="Pfam" id="PF01210">
    <property type="entry name" value="NAD_Gly3P_dh_N"/>
    <property type="match status" value="1"/>
</dbReference>
<dbReference type="PIRSF" id="PIRSF000114">
    <property type="entry name" value="Glycerol-3-P_dh"/>
    <property type="match status" value="1"/>
</dbReference>
<dbReference type="PRINTS" id="PR00077">
    <property type="entry name" value="GPDHDRGNASE"/>
</dbReference>
<dbReference type="SUPFAM" id="SSF48179">
    <property type="entry name" value="6-phosphogluconate dehydrogenase C-terminal domain-like"/>
    <property type="match status" value="1"/>
</dbReference>
<dbReference type="SUPFAM" id="SSF51735">
    <property type="entry name" value="NAD(P)-binding Rossmann-fold domains"/>
    <property type="match status" value="1"/>
</dbReference>
<dbReference type="PROSITE" id="PS00957">
    <property type="entry name" value="NAD_G3PDH"/>
    <property type="match status" value="1"/>
</dbReference>
<comment type="function">
    <text evidence="1">Catalyzes the reduction of the glycolytic intermediate dihydroxyacetone phosphate (DHAP) to sn-glycerol 3-phosphate (G3P), the key precursor for phospholipid synthesis.</text>
</comment>
<comment type="catalytic activity">
    <reaction evidence="1">
        <text>sn-glycerol 3-phosphate + NAD(+) = dihydroxyacetone phosphate + NADH + H(+)</text>
        <dbReference type="Rhea" id="RHEA:11092"/>
        <dbReference type="ChEBI" id="CHEBI:15378"/>
        <dbReference type="ChEBI" id="CHEBI:57540"/>
        <dbReference type="ChEBI" id="CHEBI:57597"/>
        <dbReference type="ChEBI" id="CHEBI:57642"/>
        <dbReference type="ChEBI" id="CHEBI:57945"/>
        <dbReference type="EC" id="1.1.1.94"/>
    </reaction>
    <physiologicalReaction direction="right-to-left" evidence="1">
        <dbReference type="Rhea" id="RHEA:11094"/>
    </physiologicalReaction>
</comment>
<comment type="catalytic activity">
    <reaction evidence="1">
        <text>sn-glycerol 3-phosphate + NADP(+) = dihydroxyacetone phosphate + NADPH + H(+)</text>
        <dbReference type="Rhea" id="RHEA:11096"/>
        <dbReference type="ChEBI" id="CHEBI:15378"/>
        <dbReference type="ChEBI" id="CHEBI:57597"/>
        <dbReference type="ChEBI" id="CHEBI:57642"/>
        <dbReference type="ChEBI" id="CHEBI:57783"/>
        <dbReference type="ChEBI" id="CHEBI:58349"/>
        <dbReference type="EC" id="1.1.1.94"/>
    </reaction>
    <physiologicalReaction direction="right-to-left" evidence="1">
        <dbReference type="Rhea" id="RHEA:11098"/>
    </physiologicalReaction>
</comment>
<comment type="pathway">
    <text evidence="1">Membrane lipid metabolism; glycerophospholipid metabolism.</text>
</comment>
<comment type="subcellular location">
    <subcellularLocation>
        <location evidence="1">Cytoplasm</location>
    </subcellularLocation>
</comment>
<comment type="similarity">
    <text evidence="1">Belongs to the NAD-dependent glycerol-3-phosphate dehydrogenase family.</text>
</comment>
<feature type="chain" id="PRO_0000255328" description="Glycerol-3-phosphate dehydrogenase [NAD(P)+]">
    <location>
        <begin position="1"/>
        <end position="369"/>
    </location>
</feature>
<feature type="region of interest" description="Disordered" evidence="2">
    <location>
        <begin position="312"/>
        <end position="369"/>
    </location>
</feature>
<feature type="compositionally biased region" description="Basic and acidic residues" evidence="2">
    <location>
        <begin position="325"/>
        <end position="336"/>
    </location>
</feature>
<feature type="compositionally biased region" description="Basic and acidic residues" evidence="2">
    <location>
        <begin position="352"/>
        <end position="369"/>
    </location>
</feature>
<feature type="active site" description="Proton acceptor" evidence="1">
    <location>
        <position position="186"/>
    </location>
</feature>
<feature type="binding site" evidence="1">
    <location>
        <position position="6"/>
    </location>
    <ligand>
        <name>NADPH</name>
        <dbReference type="ChEBI" id="CHEBI:57783"/>
    </ligand>
</feature>
<feature type="binding site" evidence="1">
    <location>
        <position position="7"/>
    </location>
    <ligand>
        <name>NADPH</name>
        <dbReference type="ChEBI" id="CHEBI:57783"/>
    </ligand>
</feature>
<feature type="binding site" evidence="1">
    <location>
        <position position="27"/>
    </location>
    <ligand>
        <name>NADPH</name>
        <dbReference type="ChEBI" id="CHEBI:57783"/>
    </ligand>
</feature>
<feature type="binding site" evidence="1">
    <location>
        <position position="28"/>
    </location>
    <ligand>
        <name>NADPH</name>
        <dbReference type="ChEBI" id="CHEBI:57783"/>
    </ligand>
</feature>
<feature type="binding site" evidence="1">
    <location>
        <position position="101"/>
    </location>
    <ligand>
        <name>NADPH</name>
        <dbReference type="ChEBI" id="CHEBI:57783"/>
    </ligand>
</feature>
<feature type="binding site" evidence="1">
    <location>
        <position position="101"/>
    </location>
    <ligand>
        <name>sn-glycerol 3-phosphate</name>
        <dbReference type="ChEBI" id="CHEBI:57597"/>
    </ligand>
</feature>
<feature type="binding site" evidence="1">
    <location>
        <position position="131"/>
    </location>
    <ligand>
        <name>sn-glycerol 3-phosphate</name>
        <dbReference type="ChEBI" id="CHEBI:57597"/>
    </ligand>
</feature>
<feature type="binding site" evidence="1">
    <location>
        <position position="135"/>
    </location>
    <ligand>
        <name>NADPH</name>
        <dbReference type="ChEBI" id="CHEBI:57783"/>
    </ligand>
</feature>
<feature type="binding site" evidence="1">
    <location>
        <position position="186"/>
    </location>
    <ligand>
        <name>sn-glycerol 3-phosphate</name>
        <dbReference type="ChEBI" id="CHEBI:57597"/>
    </ligand>
</feature>
<feature type="binding site" evidence="1">
    <location>
        <position position="239"/>
    </location>
    <ligand>
        <name>sn-glycerol 3-phosphate</name>
        <dbReference type="ChEBI" id="CHEBI:57597"/>
    </ligand>
</feature>
<feature type="binding site" evidence="1">
    <location>
        <position position="249"/>
    </location>
    <ligand>
        <name>sn-glycerol 3-phosphate</name>
        <dbReference type="ChEBI" id="CHEBI:57597"/>
    </ligand>
</feature>
<feature type="binding site" evidence="1">
    <location>
        <position position="250"/>
    </location>
    <ligand>
        <name>NADPH</name>
        <dbReference type="ChEBI" id="CHEBI:57783"/>
    </ligand>
</feature>
<feature type="binding site" evidence="1">
    <location>
        <position position="250"/>
    </location>
    <ligand>
        <name>sn-glycerol 3-phosphate</name>
        <dbReference type="ChEBI" id="CHEBI:57597"/>
    </ligand>
</feature>
<feature type="binding site" evidence="1">
    <location>
        <position position="251"/>
    </location>
    <ligand>
        <name>sn-glycerol 3-phosphate</name>
        <dbReference type="ChEBI" id="CHEBI:57597"/>
    </ligand>
</feature>
<feature type="binding site" evidence="1">
    <location>
        <position position="276"/>
    </location>
    <ligand>
        <name>NADPH</name>
        <dbReference type="ChEBI" id="CHEBI:57783"/>
    </ligand>
</feature>
<evidence type="ECO:0000255" key="1">
    <source>
        <dbReference type="HAMAP-Rule" id="MF_00394"/>
    </source>
</evidence>
<evidence type="ECO:0000256" key="2">
    <source>
        <dbReference type="SAM" id="MobiDB-lite"/>
    </source>
</evidence>
<gene>
    <name evidence="1" type="primary">gpsA</name>
    <name type="ordered locus">Lxx09700</name>
</gene>